<accession>O33038</accession>
<organism>
    <name type="scientific">Mycobacterium leprae (strain TN)</name>
    <dbReference type="NCBI Taxonomy" id="272631"/>
    <lineage>
        <taxon>Bacteria</taxon>
        <taxon>Bacillati</taxon>
        <taxon>Actinomycetota</taxon>
        <taxon>Actinomycetes</taxon>
        <taxon>Mycobacteriales</taxon>
        <taxon>Mycobacteriaceae</taxon>
        <taxon>Mycobacterium</taxon>
    </lineage>
</organism>
<keyword id="KW-1185">Reference proteome</keyword>
<keyword id="KW-0687">Ribonucleoprotein</keyword>
<keyword id="KW-0689">Ribosomal protein</keyword>
<dbReference type="EMBL" id="Z97369">
    <property type="protein sequence ID" value="CAB10657.1"/>
    <property type="molecule type" value="Genomic_DNA"/>
</dbReference>
<dbReference type="EMBL" id="AL583922">
    <property type="protein sequence ID" value="CAC30549.1"/>
    <property type="molecule type" value="Genomic_DNA"/>
</dbReference>
<dbReference type="PIR" id="H87108">
    <property type="entry name" value="H87108"/>
</dbReference>
<dbReference type="RefSeq" id="NP_302101.1">
    <property type="nucleotide sequence ID" value="NC_002677.1"/>
</dbReference>
<dbReference type="RefSeq" id="WP_010908422.1">
    <property type="nucleotide sequence ID" value="NC_002677.1"/>
</dbReference>
<dbReference type="SMR" id="O33038"/>
<dbReference type="STRING" id="272631.gene:17575439"/>
<dbReference type="KEGG" id="mle:ML1598"/>
<dbReference type="PATRIC" id="fig|272631.5.peg.3011"/>
<dbReference type="Leproma" id="ML1598"/>
<dbReference type="eggNOG" id="COG0052">
    <property type="taxonomic scope" value="Bacteria"/>
</dbReference>
<dbReference type="HOGENOM" id="CLU_040318_2_3_11"/>
<dbReference type="OrthoDB" id="9808036at2"/>
<dbReference type="Proteomes" id="UP000000806">
    <property type="component" value="Chromosome"/>
</dbReference>
<dbReference type="GO" id="GO:0022627">
    <property type="term" value="C:cytosolic small ribosomal subunit"/>
    <property type="evidence" value="ECO:0007669"/>
    <property type="project" value="TreeGrafter"/>
</dbReference>
<dbReference type="GO" id="GO:0003735">
    <property type="term" value="F:structural constituent of ribosome"/>
    <property type="evidence" value="ECO:0007669"/>
    <property type="project" value="InterPro"/>
</dbReference>
<dbReference type="GO" id="GO:0006412">
    <property type="term" value="P:translation"/>
    <property type="evidence" value="ECO:0007669"/>
    <property type="project" value="UniProtKB-UniRule"/>
</dbReference>
<dbReference type="CDD" id="cd01425">
    <property type="entry name" value="RPS2"/>
    <property type="match status" value="1"/>
</dbReference>
<dbReference type="FunFam" id="1.10.287.610:FF:000001">
    <property type="entry name" value="30S ribosomal protein S2"/>
    <property type="match status" value="1"/>
</dbReference>
<dbReference type="Gene3D" id="3.40.50.10490">
    <property type="entry name" value="Glucose-6-phosphate isomerase like protein, domain 1"/>
    <property type="match status" value="1"/>
</dbReference>
<dbReference type="Gene3D" id="1.10.287.610">
    <property type="entry name" value="Helix hairpin bin"/>
    <property type="match status" value="1"/>
</dbReference>
<dbReference type="HAMAP" id="MF_00291_B">
    <property type="entry name" value="Ribosomal_uS2_B"/>
    <property type="match status" value="1"/>
</dbReference>
<dbReference type="InterPro" id="IPR001865">
    <property type="entry name" value="Ribosomal_uS2"/>
</dbReference>
<dbReference type="InterPro" id="IPR005706">
    <property type="entry name" value="Ribosomal_uS2_bac/mit/plastid"/>
</dbReference>
<dbReference type="InterPro" id="IPR018130">
    <property type="entry name" value="Ribosomal_uS2_CS"/>
</dbReference>
<dbReference type="InterPro" id="IPR023591">
    <property type="entry name" value="Ribosomal_uS2_flav_dom_sf"/>
</dbReference>
<dbReference type="NCBIfam" id="TIGR01011">
    <property type="entry name" value="rpsB_bact"/>
    <property type="match status" value="1"/>
</dbReference>
<dbReference type="PANTHER" id="PTHR12534">
    <property type="entry name" value="30S RIBOSOMAL PROTEIN S2 PROKARYOTIC AND ORGANELLAR"/>
    <property type="match status" value="1"/>
</dbReference>
<dbReference type="PANTHER" id="PTHR12534:SF0">
    <property type="entry name" value="SMALL RIBOSOMAL SUBUNIT PROTEIN US2M"/>
    <property type="match status" value="1"/>
</dbReference>
<dbReference type="Pfam" id="PF00318">
    <property type="entry name" value="Ribosomal_S2"/>
    <property type="match status" value="1"/>
</dbReference>
<dbReference type="PRINTS" id="PR00395">
    <property type="entry name" value="RIBOSOMALS2"/>
</dbReference>
<dbReference type="SUPFAM" id="SSF52313">
    <property type="entry name" value="Ribosomal protein S2"/>
    <property type="match status" value="1"/>
</dbReference>
<dbReference type="PROSITE" id="PS00962">
    <property type="entry name" value="RIBOSOMAL_S2_1"/>
    <property type="match status" value="1"/>
</dbReference>
<comment type="similarity">
    <text evidence="2">Belongs to the universal ribosomal protein uS2 family.</text>
</comment>
<protein>
    <recommendedName>
        <fullName evidence="2">Small ribosomal subunit protein uS2</fullName>
    </recommendedName>
    <alternativeName>
        <fullName>30S ribosomal protein S2</fullName>
    </alternativeName>
</protein>
<proteinExistence type="inferred from homology"/>
<reference key="1">
    <citation type="journal article" date="2001" name="Nature">
        <title>Massive gene decay in the leprosy bacillus.</title>
        <authorList>
            <person name="Cole S.T."/>
            <person name="Eiglmeier K."/>
            <person name="Parkhill J."/>
            <person name="James K.D."/>
            <person name="Thomson N.R."/>
            <person name="Wheeler P.R."/>
            <person name="Honore N."/>
            <person name="Garnier T."/>
            <person name="Churcher C.M."/>
            <person name="Harris D.E."/>
            <person name="Mungall K.L."/>
            <person name="Basham D."/>
            <person name="Brown D."/>
            <person name="Chillingworth T."/>
            <person name="Connor R."/>
            <person name="Davies R.M."/>
            <person name="Devlin K."/>
            <person name="Duthoy S."/>
            <person name="Feltwell T."/>
            <person name="Fraser A."/>
            <person name="Hamlin N."/>
            <person name="Holroyd S."/>
            <person name="Hornsby T."/>
            <person name="Jagels K."/>
            <person name="Lacroix C."/>
            <person name="Maclean J."/>
            <person name="Moule S."/>
            <person name="Murphy L.D."/>
            <person name="Oliver K."/>
            <person name="Quail M.A."/>
            <person name="Rajandream M.A."/>
            <person name="Rutherford K.M."/>
            <person name="Rutter S."/>
            <person name="Seeger K."/>
            <person name="Simon S."/>
            <person name="Simmonds M."/>
            <person name="Skelton J."/>
            <person name="Squares R."/>
            <person name="Squares S."/>
            <person name="Stevens K."/>
            <person name="Taylor K."/>
            <person name="Whitehead S."/>
            <person name="Woodward J.R."/>
            <person name="Barrell B.G."/>
        </authorList>
    </citation>
    <scope>NUCLEOTIDE SEQUENCE [LARGE SCALE GENOMIC DNA]</scope>
    <source>
        <strain>TN</strain>
    </source>
</reference>
<name>RS2_MYCLE</name>
<evidence type="ECO:0000256" key="1">
    <source>
        <dbReference type="SAM" id="MobiDB-lite"/>
    </source>
</evidence>
<evidence type="ECO:0000305" key="2"/>
<feature type="chain" id="PRO_0000134198" description="Small ribosomal subunit protein uS2">
    <location>
        <begin position="1"/>
        <end position="277"/>
    </location>
</feature>
<feature type="region of interest" description="Disordered" evidence="1">
    <location>
        <begin position="254"/>
        <end position="277"/>
    </location>
</feature>
<gene>
    <name type="primary">rpsB</name>
    <name type="ordered locus">ML1598</name>
    <name type="ORF">MLCB250.63</name>
</gene>
<sequence>MAVVTMKQLLDSGTHFGHQTRRWNPKMKRFIFTDRNGIYIIDLQQTLTFIDKAYEFVKETVARGGLVLFVGTKKQAQESVAAEATRVGMPYVNQRWLGGMLTNFSTVHKRLQRLKELEAMEQTGGFEGRTKKEILGLTREKNKLERSLGGIRDMAKVPSAIWVVDTNKEHIAVGEARKLGVPVIAILDTNCDPDEVDYPIPGNDDAIRSAELLTTVIASAVAEGLQVRAGLRCGDGKPETEAVEPLPEWEQELLAGAGSSALNDSGADLSEANPTEA</sequence>